<gene>
    <name evidence="1" type="primary">moaA</name>
    <name type="ordered locus">gll3024</name>
</gene>
<evidence type="ECO:0000255" key="1">
    <source>
        <dbReference type="HAMAP-Rule" id="MF_01225"/>
    </source>
</evidence>
<evidence type="ECO:0000255" key="2">
    <source>
        <dbReference type="PROSITE-ProRule" id="PRU01266"/>
    </source>
</evidence>
<accession>Q7NCF5</accession>
<reference key="1">
    <citation type="journal article" date="2003" name="DNA Res.">
        <title>Complete genome structure of Gloeobacter violaceus PCC 7421, a cyanobacterium that lacks thylakoids.</title>
        <authorList>
            <person name="Nakamura Y."/>
            <person name="Kaneko T."/>
            <person name="Sato S."/>
            <person name="Mimuro M."/>
            <person name="Miyashita H."/>
            <person name="Tsuchiya T."/>
            <person name="Sasamoto S."/>
            <person name="Watanabe A."/>
            <person name="Kawashima K."/>
            <person name="Kishida Y."/>
            <person name="Kiyokawa C."/>
            <person name="Kohara M."/>
            <person name="Matsumoto M."/>
            <person name="Matsuno A."/>
            <person name="Nakazaki N."/>
            <person name="Shimpo S."/>
            <person name="Takeuchi C."/>
            <person name="Yamada M."/>
            <person name="Tabata S."/>
        </authorList>
    </citation>
    <scope>NUCLEOTIDE SEQUENCE [LARGE SCALE GENOMIC DNA]</scope>
    <source>
        <strain>ATCC 29082 / PCC 7421</strain>
    </source>
</reference>
<comment type="function">
    <text evidence="1">Catalyzes the cyclization of GTP to (8S)-3',8-cyclo-7,8-dihydroguanosine 5'-triphosphate.</text>
</comment>
<comment type="catalytic activity">
    <reaction evidence="1">
        <text>GTP + AH2 + S-adenosyl-L-methionine = (8S)-3',8-cyclo-7,8-dihydroguanosine 5'-triphosphate + 5'-deoxyadenosine + L-methionine + A + H(+)</text>
        <dbReference type="Rhea" id="RHEA:49576"/>
        <dbReference type="ChEBI" id="CHEBI:13193"/>
        <dbReference type="ChEBI" id="CHEBI:15378"/>
        <dbReference type="ChEBI" id="CHEBI:17319"/>
        <dbReference type="ChEBI" id="CHEBI:17499"/>
        <dbReference type="ChEBI" id="CHEBI:37565"/>
        <dbReference type="ChEBI" id="CHEBI:57844"/>
        <dbReference type="ChEBI" id="CHEBI:59789"/>
        <dbReference type="ChEBI" id="CHEBI:131766"/>
        <dbReference type="EC" id="4.1.99.22"/>
    </reaction>
</comment>
<comment type="cofactor">
    <cofactor evidence="1">
        <name>[4Fe-4S] cluster</name>
        <dbReference type="ChEBI" id="CHEBI:49883"/>
    </cofactor>
    <text evidence="1">Binds 2 [4Fe-4S] clusters. Binds 1 [4Fe-4S] cluster coordinated with 3 cysteines and an exchangeable S-adenosyl-L-methionine and 1 [4Fe-4S] cluster coordinated with 3 cysteines and the GTP-derived substrate.</text>
</comment>
<comment type="pathway">
    <text evidence="1">Cofactor biosynthesis; molybdopterin biosynthesis.</text>
</comment>
<comment type="subunit">
    <text evidence="1">Monomer and homodimer.</text>
</comment>
<comment type="similarity">
    <text evidence="1">Belongs to the radical SAM superfamily. MoaA family.</text>
</comment>
<dbReference type="EC" id="4.1.99.22" evidence="1"/>
<dbReference type="EMBL" id="BA000045">
    <property type="protein sequence ID" value="BAC90965.1"/>
    <property type="molecule type" value="Genomic_DNA"/>
</dbReference>
<dbReference type="RefSeq" id="NP_925970.1">
    <property type="nucleotide sequence ID" value="NC_005125.1"/>
</dbReference>
<dbReference type="RefSeq" id="WP_011143017.1">
    <property type="nucleotide sequence ID" value="NC_005125.1"/>
</dbReference>
<dbReference type="SMR" id="Q7NCF5"/>
<dbReference type="FunCoup" id="Q7NCF5">
    <property type="interactions" value="219"/>
</dbReference>
<dbReference type="STRING" id="251221.gene:10760529"/>
<dbReference type="EnsemblBacteria" id="BAC90965">
    <property type="protein sequence ID" value="BAC90965"/>
    <property type="gene ID" value="BAC90965"/>
</dbReference>
<dbReference type="KEGG" id="gvi:gll3024"/>
<dbReference type="PATRIC" id="fig|251221.4.peg.3054"/>
<dbReference type="eggNOG" id="COG2896">
    <property type="taxonomic scope" value="Bacteria"/>
</dbReference>
<dbReference type="HOGENOM" id="CLU_009273_0_1_3"/>
<dbReference type="InParanoid" id="Q7NCF5"/>
<dbReference type="OrthoDB" id="9763993at2"/>
<dbReference type="PhylomeDB" id="Q7NCF5"/>
<dbReference type="UniPathway" id="UPA00344"/>
<dbReference type="Proteomes" id="UP000000557">
    <property type="component" value="Chromosome"/>
</dbReference>
<dbReference type="GO" id="GO:0051539">
    <property type="term" value="F:4 iron, 4 sulfur cluster binding"/>
    <property type="evidence" value="ECO:0007669"/>
    <property type="project" value="UniProtKB-UniRule"/>
</dbReference>
<dbReference type="GO" id="GO:0061799">
    <property type="term" value="F:cyclic pyranopterin monophosphate synthase activity"/>
    <property type="evidence" value="ECO:0000318"/>
    <property type="project" value="GO_Central"/>
</dbReference>
<dbReference type="GO" id="GO:0061798">
    <property type="term" value="F:GTP 3',8'-cyclase activity"/>
    <property type="evidence" value="ECO:0000318"/>
    <property type="project" value="GO_Central"/>
</dbReference>
<dbReference type="GO" id="GO:0005525">
    <property type="term" value="F:GTP binding"/>
    <property type="evidence" value="ECO:0007669"/>
    <property type="project" value="UniProtKB-UniRule"/>
</dbReference>
<dbReference type="GO" id="GO:0046872">
    <property type="term" value="F:metal ion binding"/>
    <property type="evidence" value="ECO:0007669"/>
    <property type="project" value="UniProtKB-KW"/>
</dbReference>
<dbReference type="GO" id="GO:1904047">
    <property type="term" value="F:S-adenosyl-L-methionine binding"/>
    <property type="evidence" value="ECO:0007669"/>
    <property type="project" value="UniProtKB-UniRule"/>
</dbReference>
<dbReference type="GO" id="GO:0006777">
    <property type="term" value="P:Mo-molybdopterin cofactor biosynthetic process"/>
    <property type="evidence" value="ECO:0000318"/>
    <property type="project" value="GO_Central"/>
</dbReference>
<dbReference type="CDD" id="cd01335">
    <property type="entry name" value="Radical_SAM"/>
    <property type="match status" value="1"/>
</dbReference>
<dbReference type="CDD" id="cd21117">
    <property type="entry name" value="Twitch_MoaA"/>
    <property type="match status" value="1"/>
</dbReference>
<dbReference type="Gene3D" id="3.20.20.70">
    <property type="entry name" value="Aldolase class I"/>
    <property type="match status" value="1"/>
</dbReference>
<dbReference type="HAMAP" id="MF_01225_B">
    <property type="entry name" value="MoaA_B"/>
    <property type="match status" value="1"/>
</dbReference>
<dbReference type="InterPro" id="IPR013785">
    <property type="entry name" value="Aldolase_TIM"/>
</dbReference>
<dbReference type="InterPro" id="IPR006638">
    <property type="entry name" value="Elp3/MiaA/NifB-like_rSAM"/>
</dbReference>
<dbReference type="InterPro" id="IPR013483">
    <property type="entry name" value="MoaA"/>
</dbReference>
<dbReference type="InterPro" id="IPR000385">
    <property type="entry name" value="MoaA_NifB_PqqE_Fe-S-bd_CS"/>
</dbReference>
<dbReference type="InterPro" id="IPR010505">
    <property type="entry name" value="MoaA_twitch"/>
</dbReference>
<dbReference type="InterPro" id="IPR050105">
    <property type="entry name" value="MoCo_biosynth_MoaA/MoaC"/>
</dbReference>
<dbReference type="InterPro" id="IPR007197">
    <property type="entry name" value="rSAM"/>
</dbReference>
<dbReference type="NCBIfam" id="TIGR02666">
    <property type="entry name" value="moaA"/>
    <property type="match status" value="1"/>
</dbReference>
<dbReference type="PANTHER" id="PTHR22960:SF0">
    <property type="entry name" value="MOLYBDENUM COFACTOR BIOSYNTHESIS PROTEIN 1"/>
    <property type="match status" value="1"/>
</dbReference>
<dbReference type="PANTHER" id="PTHR22960">
    <property type="entry name" value="MOLYBDOPTERIN COFACTOR SYNTHESIS PROTEIN A"/>
    <property type="match status" value="1"/>
</dbReference>
<dbReference type="Pfam" id="PF06463">
    <property type="entry name" value="Mob_synth_C"/>
    <property type="match status" value="1"/>
</dbReference>
<dbReference type="Pfam" id="PF04055">
    <property type="entry name" value="Radical_SAM"/>
    <property type="match status" value="1"/>
</dbReference>
<dbReference type="SFLD" id="SFLDG01383">
    <property type="entry name" value="cyclic_pyranopterin_phosphate"/>
    <property type="match status" value="1"/>
</dbReference>
<dbReference type="SFLD" id="SFLDS00029">
    <property type="entry name" value="Radical_SAM"/>
    <property type="match status" value="1"/>
</dbReference>
<dbReference type="SMART" id="SM00729">
    <property type="entry name" value="Elp3"/>
    <property type="match status" value="1"/>
</dbReference>
<dbReference type="SUPFAM" id="SSF102114">
    <property type="entry name" value="Radical SAM enzymes"/>
    <property type="match status" value="1"/>
</dbReference>
<dbReference type="PROSITE" id="PS01305">
    <property type="entry name" value="MOAA_NIFB_PQQE"/>
    <property type="match status" value="1"/>
</dbReference>
<dbReference type="PROSITE" id="PS51918">
    <property type="entry name" value="RADICAL_SAM"/>
    <property type="match status" value="1"/>
</dbReference>
<name>MOAA_GLOVI</name>
<protein>
    <recommendedName>
        <fullName evidence="1">GTP 3',8-cyclase</fullName>
        <ecNumber evidence="1">4.1.99.22</ecNumber>
    </recommendedName>
    <alternativeName>
        <fullName evidence="1">Molybdenum cofactor biosynthesis protein A</fullName>
    </alternativeName>
</protein>
<proteinExistence type="inferred from homology"/>
<organism>
    <name type="scientific">Gloeobacter violaceus (strain ATCC 29082 / PCC 7421)</name>
    <dbReference type="NCBI Taxonomy" id="251221"/>
    <lineage>
        <taxon>Bacteria</taxon>
        <taxon>Bacillati</taxon>
        <taxon>Cyanobacteriota</taxon>
        <taxon>Cyanophyceae</taxon>
        <taxon>Gloeobacterales</taxon>
        <taxon>Gloeobacteraceae</taxon>
        <taxon>Gloeobacter</taxon>
    </lineage>
</organism>
<feature type="chain" id="PRO_0000152964" description="GTP 3',8-cyclase">
    <location>
        <begin position="1"/>
        <end position="325"/>
    </location>
</feature>
<feature type="domain" description="Radical SAM core" evidence="2">
    <location>
        <begin position="1"/>
        <end position="226"/>
    </location>
</feature>
<feature type="binding site" evidence="1">
    <location>
        <position position="8"/>
    </location>
    <ligand>
        <name>GTP</name>
        <dbReference type="ChEBI" id="CHEBI:37565"/>
    </ligand>
</feature>
<feature type="binding site" evidence="1">
    <location>
        <position position="15"/>
    </location>
    <ligand>
        <name>[4Fe-4S] cluster</name>
        <dbReference type="ChEBI" id="CHEBI:49883"/>
        <label>1</label>
        <note>4Fe-4S-S-AdoMet</note>
    </ligand>
</feature>
<feature type="binding site" evidence="1">
    <location>
        <position position="19"/>
    </location>
    <ligand>
        <name>[4Fe-4S] cluster</name>
        <dbReference type="ChEBI" id="CHEBI:49883"/>
        <label>1</label>
        <note>4Fe-4S-S-AdoMet</note>
    </ligand>
</feature>
<feature type="binding site" evidence="1">
    <location>
        <position position="21"/>
    </location>
    <ligand>
        <name>S-adenosyl-L-methionine</name>
        <dbReference type="ChEBI" id="CHEBI:59789"/>
    </ligand>
</feature>
<feature type="binding site" evidence="1">
    <location>
        <position position="22"/>
    </location>
    <ligand>
        <name>[4Fe-4S] cluster</name>
        <dbReference type="ChEBI" id="CHEBI:49883"/>
        <label>1</label>
        <note>4Fe-4S-S-AdoMet</note>
    </ligand>
</feature>
<feature type="binding site" evidence="1">
    <location>
        <position position="60"/>
    </location>
    <ligand>
        <name>GTP</name>
        <dbReference type="ChEBI" id="CHEBI:37565"/>
    </ligand>
</feature>
<feature type="binding site" evidence="1">
    <location>
        <position position="64"/>
    </location>
    <ligand>
        <name>S-adenosyl-L-methionine</name>
        <dbReference type="ChEBI" id="CHEBI:59789"/>
    </ligand>
</feature>
<feature type="binding site" evidence="1">
    <location>
        <position position="91"/>
    </location>
    <ligand>
        <name>GTP</name>
        <dbReference type="ChEBI" id="CHEBI:37565"/>
    </ligand>
</feature>
<feature type="binding site" evidence="1">
    <location>
        <position position="115"/>
    </location>
    <ligand>
        <name>S-adenosyl-L-methionine</name>
        <dbReference type="ChEBI" id="CHEBI:59789"/>
    </ligand>
</feature>
<feature type="binding site" evidence="1">
    <location>
        <position position="152"/>
    </location>
    <ligand>
        <name>GTP</name>
        <dbReference type="ChEBI" id="CHEBI:37565"/>
    </ligand>
</feature>
<feature type="binding site" evidence="1">
    <location>
        <position position="186"/>
    </location>
    <ligand>
        <name>S-adenosyl-L-methionine</name>
        <dbReference type="ChEBI" id="CHEBI:59789"/>
    </ligand>
</feature>
<feature type="binding site" evidence="1">
    <location>
        <position position="249"/>
    </location>
    <ligand>
        <name>[4Fe-4S] cluster</name>
        <dbReference type="ChEBI" id="CHEBI:49883"/>
        <label>2</label>
        <note>4Fe-4S-substrate</note>
    </ligand>
</feature>
<feature type="binding site" evidence="1">
    <location>
        <position position="252"/>
    </location>
    <ligand>
        <name>[4Fe-4S] cluster</name>
        <dbReference type="ChEBI" id="CHEBI:49883"/>
        <label>2</label>
        <note>4Fe-4S-substrate</note>
    </ligand>
</feature>
<feature type="binding site" evidence="1">
    <location>
        <begin position="254"/>
        <end position="256"/>
    </location>
    <ligand>
        <name>GTP</name>
        <dbReference type="ChEBI" id="CHEBI:37565"/>
    </ligand>
</feature>
<feature type="binding site" evidence="1">
    <location>
        <position position="266"/>
    </location>
    <ligand>
        <name>[4Fe-4S] cluster</name>
        <dbReference type="ChEBI" id="CHEBI:49883"/>
        <label>2</label>
        <note>4Fe-4S-substrate</note>
    </ligand>
</feature>
<sequence length="325" mass="36001">MNTVNYLRISLVDRCNFRCSYCMPTGEAIAYLHRSQILSYEELLFLVGEVFLPLGIDRFRLTGGEPLLRRGVVGFVRALVGLPGVADVSLSTNAYLLEELAEDLYAAGLRRVNISLDSLDPGVFARITGRDHWSKVWAGIQAAHRVGFDPLKLNVVVLPGINEQEVPDLAALTIDRQWHVRFIEFMPIGNTGYFEQAGWVNSETLRSRIRERFGLGEGACYGNGPADVFQIPGAKGTVGFISQMSECFCSRCNRVRLAADGFLRPCLLNEADQIDLKTPLRAGAGAAQLRELVSELLLRKPEINFRERDRGTTGSYGRTMSQIGG</sequence>
<keyword id="KW-0004">4Fe-4S</keyword>
<keyword id="KW-0342">GTP-binding</keyword>
<keyword id="KW-0408">Iron</keyword>
<keyword id="KW-0411">Iron-sulfur</keyword>
<keyword id="KW-0456">Lyase</keyword>
<keyword id="KW-0479">Metal-binding</keyword>
<keyword id="KW-0501">Molybdenum cofactor biosynthesis</keyword>
<keyword id="KW-0547">Nucleotide-binding</keyword>
<keyword id="KW-1185">Reference proteome</keyword>
<keyword id="KW-0949">S-adenosyl-L-methionine</keyword>